<organism>
    <name type="scientific">Glycine max</name>
    <name type="common">Soybean</name>
    <name type="synonym">Glycine hispida</name>
    <dbReference type="NCBI Taxonomy" id="3847"/>
    <lineage>
        <taxon>Eukaryota</taxon>
        <taxon>Viridiplantae</taxon>
        <taxon>Streptophyta</taxon>
        <taxon>Embryophyta</taxon>
        <taxon>Tracheophyta</taxon>
        <taxon>Spermatophyta</taxon>
        <taxon>Magnoliopsida</taxon>
        <taxon>eudicotyledons</taxon>
        <taxon>Gunneridae</taxon>
        <taxon>Pentapetalae</taxon>
        <taxon>rosids</taxon>
        <taxon>fabids</taxon>
        <taxon>Fabales</taxon>
        <taxon>Fabaceae</taxon>
        <taxon>Papilionoideae</taxon>
        <taxon>50 kb inversion clade</taxon>
        <taxon>NPAAA clade</taxon>
        <taxon>indigoferoid/millettioid clade</taxon>
        <taxon>Phaseoleae</taxon>
        <taxon>Glycine</taxon>
        <taxon>Glycine subgen. Soja</taxon>
    </lineage>
</organism>
<evidence type="ECO:0000250" key="1">
    <source>
        <dbReference type="UniProtKB" id="P00410"/>
    </source>
</evidence>
<evidence type="ECO:0000255" key="2"/>
<evidence type="ECO:0000305" key="3"/>
<comment type="function">
    <text evidence="1">Component of the cytochrome c oxidase, the last enzyme in the mitochondrial electron transport chain which drives oxidative phosphorylation. The respiratory chain contains 3 multisubunit complexes succinate dehydrogenase (complex II, CII), ubiquinol-cytochrome c oxidoreductase (cytochrome b-c1 complex, complex III, CIII) and cytochrome c oxidase (complex IV, CIV), that cooperate to transfer electrons derived from NADH and succinate to molecular oxygen, creating an electrochemical gradient over the inner membrane that drives transmembrane transport and the ATP synthase. Cytochrome c oxidase is the component of the respiratory chain that catalyzes the reduction of oxygen to water. Electrons originating from reduced cytochrome c in the intermembrane space (IMS) are transferred via the dinuclear copper A center (CU(A)) of subunit 2 and heme A of subunit 1 to the active site in subunit 1, a binuclear center (BNC) formed by heme A3 and copper B (CU(B)). The BNC reduces molecular oxygen to 2 water molecules using 4 electrons from cytochrome c in the IMS and 4 protons from the mitochondrial matrix.</text>
</comment>
<comment type="catalytic activity">
    <reaction evidence="1">
        <text>4 Fe(II)-[cytochrome c] + O2 + 8 H(+)(in) = 4 Fe(III)-[cytochrome c] + 2 H2O + 4 H(+)(out)</text>
        <dbReference type="Rhea" id="RHEA:11436"/>
        <dbReference type="Rhea" id="RHEA-COMP:10350"/>
        <dbReference type="Rhea" id="RHEA-COMP:14399"/>
        <dbReference type="ChEBI" id="CHEBI:15377"/>
        <dbReference type="ChEBI" id="CHEBI:15378"/>
        <dbReference type="ChEBI" id="CHEBI:15379"/>
        <dbReference type="ChEBI" id="CHEBI:29033"/>
        <dbReference type="ChEBI" id="CHEBI:29034"/>
        <dbReference type="EC" id="7.1.1.9"/>
    </reaction>
    <physiologicalReaction direction="left-to-right" evidence="1">
        <dbReference type="Rhea" id="RHEA:11437"/>
    </physiologicalReaction>
</comment>
<comment type="cofactor">
    <cofactor evidence="1">
        <name>Cu cation</name>
        <dbReference type="ChEBI" id="CHEBI:23378"/>
    </cofactor>
    <text evidence="1">Binds a dinuclear copper A center per subunit.</text>
</comment>
<comment type="subunit">
    <text evidence="1">Component of the cytochrome c oxidase (complex IV, CIV), a multisubunit enzyme composed of a catalytic core of 3 subunits and several supernumerary subunits. The complex exists as a monomer or a dimer and forms supercomplexes (SCs) in the inner mitochondrial membrane with ubiquinol-cytochrome c oxidoreductase (cytochrome b-c1 complex, complex III, CIII).</text>
</comment>
<comment type="subcellular location">
    <subcellularLocation>
        <location evidence="1">Mitochondrion inner membrane</location>
        <topology evidence="1">Multi-pass membrane protein</topology>
    </subcellularLocation>
</comment>
<comment type="similarity">
    <text evidence="3">Belongs to the cytochrome c oxidase subunit 2 family.</text>
</comment>
<feature type="transit peptide" description="Mitochondrion" evidence="2">
    <location>
        <begin position="1" status="less than"/>
        <end position="119" status="uncertain"/>
    </location>
</feature>
<feature type="chain" id="PRO_0000006043" description="Cytochrome c oxidase subunit 2, mitochondrial">
    <location>
        <begin position="120" status="uncertain"/>
        <end position="394"/>
    </location>
</feature>
<feature type="topological domain" description="Mitochondrial intermembrane" evidence="2">
    <location>
        <begin position="120"/>
        <end position="181"/>
    </location>
</feature>
<feature type="transmembrane region" description="Helical" evidence="2">
    <location>
        <begin position="182"/>
        <end position="198"/>
    </location>
</feature>
<feature type="topological domain" description="Mitochondrial matrix" evidence="2">
    <location>
        <begin position="199"/>
        <end position="226"/>
    </location>
</feature>
<feature type="transmembrane region" description="Helical" evidence="2">
    <location>
        <begin position="227"/>
        <end position="243"/>
    </location>
</feature>
<feature type="topological domain" description="Mitochondrial intermembrane" evidence="2">
    <location>
        <begin position="244"/>
        <end position="394"/>
    </location>
</feature>
<feature type="binding site" evidence="1">
    <location>
        <position position="327"/>
    </location>
    <ligand>
        <name>Cu cation</name>
        <dbReference type="ChEBI" id="CHEBI:23378"/>
        <label>A1</label>
    </ligand>
</feature>
<feature type="binding site" evidence="1">
    <location>
        <position position="362"/>
    </location>
    <ligand>
        <name>Cu cation</name>
        <dbReference type="ChEBI" id="CHEBI:23378"/>
        <label>A1</label>
    </ligand>
</feature>
<feature type="binding site" evidence="1">
    <location>
        <position position="362"/>
    </location>
    <ligand>
        <name>Cu cation</name>
        <dbReference type="ChEBI" id="CHEBI:23378"/>
        <label>A2</label>
    </ligand>
</feature>
<feature type="binding site" evidence="1">
    <location>
        <position position="364"/>
    </location>
    <ligand>
        <name>Cu cation</name>
        <dbReference type="ChEBI" id="CHEBI:23378"/>
        <label>A2</label>
    </ligand>
</feature>
<feature type="binding site" evidence="1">
    <location>
        <position position="364"/>
    </location>
    <ligand>
        <name>Mg(2+)</name>
        <dbReference type="ChEBI" id="CHEBI:18420"/>
        <note>ligand shared with subunit 1</note>
    </ligand>
</feature>
<feature type="binding site" evidence="1">
    <location>
        <position position="366"/>
    </location>
    <ligand>
        <name>Cu cation</name>
        <dbReference type="ChEBI" id="CHEBI:23378"/>
        <label>A1</label>
    </ligand>
</feature>
<feature type="binding site" evidence="1">
    <location>
        <position position="366"/>
    </location>
    <ligand>
        <name>Cu cation</name>
        <dbReference type="ChEBI" id="CHEBI:23378"/>
        <label>A2</label>
    </ligand>
</feature>
<feature type="binding site" evidence="1">
    <location>
        <position position="370"/>
    </location>
    <ligand>
        <name>Cu cation</name>
        <dbReference type="ChEBI" id="CHEBI:23378"/>
        <label>A2</label>
    </ligand>
</feature>
<feature type="binding site" evidence="1">
    <location>
        <position position="373"/>
    </location>
    <ligand>
        <name>Cu cation</name>
        <dbReference type="ChEBI" id="CHEBI:23378"/>
        <label>A1</label>
    </ligand>
</feature>
<feature type="non-terminal residue">
    <location>
        <position position="1"/>
    </location>
</feature>
<accession>Q02226</accession>
<gene>
    <name type="primary">COX2</name>
</gene>
<proteinExistence type="inferred from homology"/>
<protein>
    <recommendedName>
        <fullName>Cytochrome c oxidase subunit 2, mitochondrial</fullName>
        <ecNumber>7.1.1.9</ecNumber>
    </recommendedName>
    <alternativeName>
        <fullName>Cytochrome c oxidase polypeptide II</fullName>
    </alternativeName>
</protein>
<keyword id="KW-0186">Copper</keyword>
<keyword id="KW-0249">Electron transport</keyword>
<keyword id="KW-0460">Magnesium</keyword>
<keyword id="KW-0472">Membrane</keyword>
<keyword id="KW-0479">Metal-binding</keyword>
<keyword id="KW-0496">Mitochondrion</keyword>
<keyword id="KW-0999">Mitochondrion inner membrane</keyword>
<keyword id="KW-1185">Reference proteome</keyword>
<keyword id="KW-0679">Respiratory chain</keyword>
<keyword id="KW-0809">Transit peptide</keyword>
<keyword id="KW-1278">Translocase</keyword>
<keyword id="KW-0812">Transmembrane</keyword>
<keyword id="KW-1133">Transmembrane helix</keyword>
<keyword id="KW-0813">Transport</keyword>
<name>COXT_SOYBN</name>
<sequence length="394" mass="44333">ILCPLEAFIVQHILTISVMGLLSCFRSTVLRKCSKGSSGMSRFLYTNNFQRNLISSGGNESYYGYFNRRSYTSLYMGTGTVGGITSARIRVPNVGCEGFMCSSHLSITQRNSRLIHSTSKIVPNSEIQNITTEMVKTPEVSRWMDQVIPTIAPCDAAEPWQLGFQDAATPIMQGIIDLHHDIFFFVIQIGVFVSWVLLRALWHFRSKMNPIPQRIVHGTTIEILWTIFPSVILMFIAIPSFALLYSMDDIVVDPAITIKAIGHQWYWTYEYSDYNNSDEQSLAFDSYMIPEDDLELGQLRLLEVDNRVVVPAKTHLRVIITSADVLHSWAVPSLGVKCDAVPGRLNQISTFIQREGVYYGQCSEICGTNHAFMPIVIEAVSTKDYGSWVSSQVN</sequence>
<dbReference type="EC" id="7.1.1.9"/>
<dbReference type="EMBL" id="Z11980">
    <property type="protein sequence ID" value="CAA78032.1"/>
    <property type="molecule type" value="Genomic_DNA"/>
</dbReference>
<dbReference type="PIR" id="S28027">
    <property type="entry name" value="S28027"/>
</dbReference>
<dbReference type="SMR" id="Q02226"/>
<dbReference type="STRING" id="3847.Q02226"/>
<dbReference type="PaxDb" id="3847-GLYMA09G04480.1"/>
<dbReference type="eggNOG" id="KOG4767">
    <property type="taxonomic scope" value="Eukaryota"/>
</dbReference>
<dbReference type="InParanoid" id="Q02226"/>
<dbReference type="Proteomes" id="UP000008827">
    <property type="component" value="Unplaced"/>
</dbReference>
<dbReference type="GO" id="GO:0005743">
    <property type="term" value="C:mitochondrial inner membrane"/>
    <property type="evidence" value="ECO:0007669"/>
    <property type="project" value="UniProtKB-SubCell"/>
</dbReference>
<dbReference type="GO" id="GO:0005507">
    <property type="term" value="F:copper ion binding"/>
    <property type="evidence" value="ECO:0007669"/>
    <property type="project" value="InterPro"/>
</dbReference>
<dbReference type="GO" id="GO:0004129">
    <property type="term" value="F:cytochrome-c oxidase activity"/>
    <property type="evidence" value="ECO:0007669"/>
    <property type="project" value="UniProtKB-EC"/>
</dbReference>
<dbReference type="GO" id="GO:0042773">
    <property type="term" value="P:ATP synthesis coupled electron transport"/>
    <property type="evidence" value="ECO:0000318"/>
    <property type="project" value="GO_Central"/>
</dbReference>
<dbReference type="CDD" id="cd13912">
    <property type="entry name" value="CcO_II_C"/>
    <property type="match status" value="1"/>
</dbReference>
<dbReference type="FunFam" id="1.10.287.90:FF:000004">
    <property type="entry name" value="Cytochrome c oxidase subunit 2"/>
    <property type="match status" value="1"/>
</dbReference>
<dbReference type="FunFam" id="2.60.40.420:FF:000001">
    <property type="entry name" value="Cytochrome c oxidase subunit 2"/>
    <property type="match status" value="1"/>
</dbReference>
<dbReference type="Gene3D" id="1.10.287.90">
    <property type="match status" value="1"/>
</dbReference>
<dbReference type="Gene3D" id="2.60.40.420">
    <property type="entry name" value="Cupredoxins - blue copper proteins"/>
    <property type="match status" value="1"/>
</dbReference>
<dbReference type="InterPro" id="IPR045187">
    <property type="entry name" value="CcO_II"/>
</dbReference>
<dbReference type="InterPro" id="IPR002429">
    <property type="entry name" value="CcO_II-like_C"/>
</dbReference>
<dbReference type="InterPro" id="IPR034210">
    <property type="entry name" value="CcO_II_C"/>
</dbReference>
<dbReference type="InterPro" id="IPR001505">
    <property type="entry name" value="Copper_CuA"/>
</dbReference>
<dbReference type="InterPro" id="IPR008972">
    <property type="entry name" value="Cupredoxin"/>
</dbReference>
<dbReference type="InterPro" id="IPR014222">
    <property type="entry name" value="Cyt_c_oxidase_su2"/>
</dbReference>
<dbReference type="InterPro" id="IPR011759">
    <property type="entry name" value="Cyt_c_oxidase_su2_TM_dom"/>
</dbReference>
<dbReference type="InterPro" id="IPR036257">
    <property type="entry name" value="Cyt_c_oxidase_su2_TM_sf"/>
</dbReference>
<dbReference type="NCBIfam" id="TIGR02866">
    <property type="entry name" value="CoxB"/>
    <property type="match status" value="1"/>
</dbReference>
<dbReference type="PANTHER" id="PTHR22888:SF9">
    <property type="entry name" value="CYTOCHROME C OXIDASE SUBUNIT 2"/>
    <property type="match status" value="1"/>
</dbReference>
<dbReference type="PANTHER" id="PTHR22888">
    <property type="entry name" value="CYTOCHROME C OXIDASE, SUBUNIT II"/>
    <property type="match status" value="1"/>
</dbReference>
<dbReference type="Pfam" id="PF00116">
    <property type="entry name" value="COX2"/>
    <property type="match status" value="1"/>
</dbReference>
<dbReference type="Pfam" id="PF02790">
    <property type="entry name" value="COX2_TM"/>
    <property type="match status" value="1"/>
</dbReference>
<dbReference type="PRINTS" id="PR01166">
    <property type="entry name" value="CYCOXIDASEII"/>
</dbReference>
<dbReference type="SUPFAM" id="SSF49503">
    <property type="entry name" value="Cupredoxins"/>
    <property type="match status" value="1"/>
</dbReference>
<dbReference type="SUPFAM" id="SSF81464">
    <property type="entry name" value="Cytochrome c oxidase subunit II-like, transmembrane region"/>
    <property type="match status" value="1"/>
</dbReference>
<dbReference type="PROSITE" id="PS00078">
    <property type="entry name" value="COX2"/>
    <property type="match status" value="1"/>
</dbReference>
<dbReference type="PROSITE" id="PS50857">
    <property type="entry name" value="COX2_CUA"/>
    <property type="match status" value="1"/>
</dbReference>
<dbReference type="PROSITE" id="PS50999">
    <property type="entry name" value="COX2_TM"/>
    <property type="match status" value="1"/>
</dbReference>
<reference key="1">
    <citation type="journal article" date="1992" name="EMBO J.">
        <title>Silent mitochondrial and active nuclear genes for subunit 2 of cytochrome c oxidase (cox2) in soybean: evidence for RNA-mediated gene transfer.</title>
        <authorList>
            <person name="Covello P.S."/>
            <person name="Gray M.W."/>
        </authorList>
    </citation>
    <scope>NUCLEOTIDE SEQUENCE [GENOMIC DNA]</scope>
    <source>
        <strain>cv. Williams</strain>
        <tissue>Leaf</tissue>
        <tissue>Shoot</tissue>
    </source>
</reference>